<reference key="1">
    <citation type="journal article" date="2002" name="Yeast">
        <title>Cloning and analysis of CoEXG1, a secreted 1,3-beta-glucanase of the yeast biocontrol agent Candida oleophila.</title>
        <authorList>
            <person name="Segal E."/>
            <person name="Yehuda H."/>
            <person name="Droby S."/>
            <person name="Wisniewski M."/>
            <person name="Goldway M."/>
        </authorList>
    </citation>
    <scope>NUCLEOTIDE SEQUENCE [GENOMIC DNA]</scope>
    <scope>SUBCELLULAR LOCATION</scope>
    <source>
        <strain>ATCC MYA-1208 / I-182 / NRRL Y-18846</strain>
    </source>
</reference>
<keyword id="KW-0961">Cell wall biogenesis/degradation</keyword>
<keyword id="KW-1015">Disulfide bond</keyword>
<keyword id="KW-0326">Glycosidase</keyword>
<keyword id="KW-0378">Hydrolase</keyword>
<keyword id="KW-0964">Secreted</keyword>
<keyword id="KW-0732">Signal</keyword>
<keyword id="KW-0865">Zymogen</keyword>
<feature type="signal peptide" evidence="2">
    <location>
        <begin position="1"/>
        <end position="17"/>
    </location>
</feature>
<feature type="chain" id="PRO_0000007880" description="Glucan 1,3-beta-glucosidase">
    <location>
        <begin position="18"/>
        <end position="425"/>
    </location>
</feature>
<feature type="active site" description="Proton donor" evidence="1">
    <location>
        <position position="214"/>
    </location>
</feature>
<feature type="active site" description="Nucleophile" evidence="1">
    <location>
        <position position="328"/>
    </location>
</feature>
<feature type="disulfide bond" evidence="1">
    <location>
        <begin position="301"/>
        <end position="423"/>
    </location>
</feature>
<feature type="disulfide bond" evidence="1">
    <location>
        <begin position="326"/>
        <end position="352"/>
    </location>
</feature>
<organism>
    <name type="scientific">Candida oleophila</name>
    <name type="common">Yeast</name>
    <dbReference type="NCBI Taxonomy" id="45573"/>
    <lineage>
        <taxon>Eukaryota</taxon>
        <taxon>Fungi</taxon>
        <taxon>Dikarya</taxon>
        <taxon>Ascomycota</taxon>
        <taxon>Saccharomycotina</taxon>
        <taxon>Pichiomycetes</taxon>
        <taxon>Debaryomycetaceae</taxon>
        <taxon>Kurtzmaniella</taxon>
    </lineage>
</organism>
<dbReference type="EC" id="3.2.1.58"/>
<dbReference type="EMBL" id="AF393806">
    <property type="protein sequence ID" value="AAM21469.1"/>
    <property type="molecule type" value="Genomic_DNA"/>
</dbReference>
<dbReference type="SMR" id="Q8NKF9"/>
<dbReference type="CAZy" id="GH5">
    <property type="family name" value="Glycoside Hydrolase Family 5"/>
</dbReference>
<dbReference type="GO" id="GO:0009986">
    <property type="term" value="C:cell surface"/>
    <property type="evidence" value="ECO:0007669"/>
    <property type="project" value="TreeGrafter"/>
</dbReference>
<dbReference type="GO" id="GO:0005576">
    <property type="term" value="C:extracellular region"/>
    <property type="evidence" value="ECO:0007669"/>
    <property type="project" value="UniProtKB-SubCell"/>
</dbReference>
<dbReference type="GO" id="GO:0004338">
    <property type="term" value="F:glucan exo-1,3-beta-glucosidase activity"/>
    <property type="evidence" value="ECO:0007669"/>
    <property type="project" value="UniProtKB-EC"/>
</dbReference>
<dbReference type="GO" id="GO:0071555">
    <property type="term" value="P:cell wall organization"/>
    <property type="evidence" value="ECO:0007669"/>
    <property type="project" value="UniProtKB-KW"/>
</dbReference>
<dbReference type="GO" id="GO:0009251">
    <property type="term" value="P:glucan catabolic process"/>
    <property type="evidence" value="ECO:0007669"/>
    <property type="project" value="TreeGrafter"/>
</dbReference>
<dbReference type="FunFam" id="3.20.20.80:FF:000033">
    <property type="entry name" value="Glucan 1,3-beta-glucosidase A"/>
    <property type="match status" value="1"/>
</dbReference>
<dbReference type="Gene3D" id="3.20.20.80">
    <property type="entry name" value="Glycosidases"/>
    <property type="match status" value="1"/>
</dbReference>
<dbReference type="InterPro" id="IPR001547">
    <property type="entry name" value="Glyco_hydro_5"/>
</dbReference>
<dbReference type="InterPro" id="IPR018087">
    <property type="entry name" value="Glyco_hydro_5_CS"/>
</dbReference>
<dbReference type="InterPro" id="IPR017853">
    <property type="entry name" value="Glycoside_hydrolase_SF"/>
</dbReference>
<dbReference type="InterPro" id="IPR050386">
    <property type="entry name" value="Glycosyl_hydrolase_5"/>
</dbReference>
<dbReference type="PANTHER" id="PTHR31297:SF1">
    <property type="entry name" value="GLUCAN 1,3-BETA-GLUCOSIDASE I_II-RELATED"/>
    <property type="match status" value="1"/>
</dbReference>
<dbReference type="PANTHER" id="PTHR31297">
    <property type="entry name" value="GLUCAN ENDO-1,6-BETA-GLUCOSIDASE B"/>
    <property type="match status" value="1"/>
</dbReference>
<dbReference type="Pfam" id="PF00150">
    <property type="entry name" value="Cellulase"/>
    <property type="match status" value="1"/>
</dbReference>
<dbReference type="SUPFAM" id="SSF51445">
    <property type="entry name" value="(Trans)glycosidases"/>
    <property type="match status" value="1"/>
</dbReference>
<dbReference type="PROSITE" id="PS00659">
    <property type="entry name" value="GLYCOSYL_HYDROL_F5"/>
    <property type="match status" value="1"/>
</dbReference>
<proteinExistence type="inferred from homology"/>
<comment type="function">
    <text evidence="1">Beta-glucanases participate in the metabolism of beta-glucan, the main structural component of the cell wall. It could also function biosynthetically as a transglycosylase (By similarity).</text>
</comment>
<comment type="catalytic activity">
    <reaction>
        <text>Successive hydrolysis of beta-D-glucose units from the non-reducing ends of (1-&gt;3)-beta-D-glucans, releasing alpha-glucose.</text>
        <dbReference type="EC" id="3.2.1.58"/>
    </reaction>
</comment>
<comment type="subcellular location">
    <subcellularLocation>
        <location evidence="3">Secreted</location>
    </subcellularLocation>
</comment>
<comment type="similarity">
    <text evidence="4">Belongs to the glycosyl hydrolase 5 (cellulase A) family.</text>
</comment>
<evidence type="ECO:0000250" key="1"/>
<evidence type="ECO:0000255" key="2"/>
<evidence type="ECO:0000269" key="3">
    <source>
    </source>
</evidence>
<evidence type="ECO:0000305" key="4"/>
<gene>
    <name type="primary">EXG1</name>
</gene>
<sequence>MLLTFAPIFLLISSIVAAPTLQLQRKGLEWDYQNDKIRGVNLGGWFVLEPYITPSLFSVWSNGEDDLNTPVDEYHYTQKLGKETALSRLEAHWSSWYTEADFAQMKYLGINAVRIPIGYWAFQLLDNDPYVQGQVKYLDQALEWCRNNGLYAWVDLHGAPGSQNGFDNSGLRDSYKFQDDDDVKVTLEVLKTIGAKYGGSDYEDVVIGIELLNEPLGPVLDMDGLRQFYQDGYSEIRNNDGVESYNAIIIHDAFQQTDHYWDNFMQVSGGYWNVVVDHHHYQVFDQAALELLIEDHIKTACNWGTTHKDEAHWNIVGEWSSALTDCAKWLNGVGHGARWSGNYDNCPYIDSCLSYTDLSGWTDEYKTNVRKYTEAQLDAWEQVGGWFFWCWKTESAPEWDFQALTNAGLIPQPLNDRQYPNQCGY</sequence>
<accession>Q8NKF9</accession>
<protein>
    <recommendedName>
        <fullName>Glucan 1,3-beta-glucosidase</fullName>
        <ecNumber>3.2.1.58</ecNumber>
    </recommendedName>
    <alternativeName>
        <fullName>Exo-1,3-beta-glucanase</fullName>
    </alternativeName>
</protein>
<name>EXG_CANOL</name>